<dbReference type="EC" id="4.1.2.19" evidence="1"/>
<dbReference type="EMBL" id="CP000950">
    <property type="protein sequence ID" value="ACA70112.1"/>
    <property type="molecule type" value="Genomic_DNA"/>
</dbReference>
<dbReference type="RefSeq" id="WP_002209103.1">
    <property type="nucleotide sequence ID" value="NZ_CP009792.1"/>
</dbReference>
<dbReference type="SMR" id="B1JND0"/>
<dbReference type="GeneID" id="57974277"/>
<dbReference type="KEGG" id="ypy:YPK_3847"/>
<dbReference type="PATRIC" id="fig|502800.11.peg.194"/>
<dbReference type="UniPathway" id="UPA00541">
    <property type="reaction ID" value="UER00603"/>
</dbReference>
<dbReference type="GO" id="GO:0005829">
    <property type="term" value="C:cytosol"/>
    <property type="evidence" value="ECO:0007669"/>
    <property type="project" value="TreeGrafter"/>
</dbReference>
<dbReference type="GO" id="GO:0046872">
    <property type="term" value="F:metal ion binding"/>
    <property type="evidence" value="ECO:0007669"/>
    <property type="project" value="UniProtKB-KW"/>
</dbReference>
<dbReference type="GO" id="GO:0008994">
    <property type="term" value="F:rhamnulose-1-phosphate aldolase activity"/>
    <property type="evidence" value="ECO:0007669"/>
    <property type="project" value="UniProtKB-UniRule"/>
</dbReference>
<dbReference type="GO" id="GO:0019323">
    <property type="term" value="P:pentose catabolic process"/>
    <property type="evidence" value="ECO:0007669"/>
    <property type="project" value="TreeGrafter"/>
</dbReference>
<dbReference type="GO" id="GO:0019301">
    <property type="term" value="P:rhamnose catabolic process"/>
    <property type="evidence" value="ECO:0007669"/>
    <property type="project" value="UniProtKB-UniRule"/>
</dbReference>
<dbReference type="CDD" id="cd00398">
    <property type="entry name" value="Aldolase_II"/>
    <property type="match status" value="1"/>
</dbReference>
<dbReference type="FunFam" id="3.40.225.10:FF:000006">
    <property type="entry name" value="Rhamnulose-1-phosphate aldolase"/>
    <property type="match status" value="1"/>
</dbReference>
<dbReference type="Gene3D" id="3.40.225.10">
    <property type="entry name" value="Class II aldolase/adducin N-terminal domain"/>
    <property type="match status" value="1"/>
</dbReference>
<dbReference type="HAMAP" id="MF_00770">
    <property type="entry name" value="RhaD"/>
    <property type="match status" value="1"/>
</dbReference>
<dbReference type="InterPro" id="IPR050197">
    <property type="entry name" value="Aldolase_class_II_sugar_metab"/>
</dbReference>
<dbReference type="InterPro" id="IPR001303">
    <property type="entry name" value="Aldolase_II/adducin_N"/>
</dbReference>
<dbReference type="InterPro" id="IPR036409">
    <property type="entry name" value="Aldolase_II/adducin_N_sf"/>
</dbReference>
<dbReference type="InterPro" id="IPR013447">
    <property type="entry name" value="Rhamnulose-1-P_Aldolase"/>
</dbReference>
<dbReference type="NCBIfam" id="NF002963">
    <property type="entry name" value="PRK03634.1"/>
    <property type="match status" value="1"/>
</dbReference>
<dbReference type="NCBIfam" id="TIGR02624">
    <property type="entry name" value="rhamnu_1P_ald"/>
    <property type="match status" value="1"/>
</dbReference>
<dbReference type="PANTHER" id="PTHR22789">
    <property type="entry name" value="FUCULOSE PHOSPHATE ALDOLASE"/>
    <property type="match status" value="1"/>
</dbReference>
<dbReference type="PANTHER" id="PTHR22789:SF16">
    <property type="entry name" value="RHAMNULOSE-1-PHOSPHATE ALDOLASE"/>
    <property type="match status" value="1"/>
</dbReference>
<dbReference type="Pfam" id="PF00596">
    <property type="entry name" value="Aldolase_II"/>
    <property type="match status" value="1"/>
</dbReference>
<dbReference type="SMART" id="SM01007">
    <property type="entry name" value="Aldolase_II"/>
    <property type="match status" value="1"/>
</dbReference>
<dbReference type="SUPFAM" id="SSF53639">
    <property type="entry name" value="AraD/HMP-PK domain-like"/>
    <property type="match status" value="1"/>
</dbReference>
<gene>
    <name evidence="1" type="primary">rhaD</name>
    <name type="ordered locus">YPK_3847</name>
</gene>
<organism>
    <name type="scientific">Yersinia pseudotuberculosis serotype O:3 (strain YPIII)</name>
    <dbReference type="NCBI Taxonomy" id="502800"/>
    <lineage>
        <taxon>Bacteria</taxon>
        <taxon>Pseudomonadati</taxon>
        <taxon>Pseudomonadota</taxon>
        <taxon>Gammaproteobacteria</taxon>
        <taxon>Enterobacterales</taxon>
        <taxon>Yersiniaceae</taxon>
        <taxon>Yersinia</taxon>
    </lineage>
</organism>
<keyword id="KW-0963">Cytoplasm</keyword>
<keyword id="KW-0456">Lyase</keyword>
<keyword id="KW-0479">Metal-binding</keyword>
<keyword id="KW-0684">Rhamnose metabolism</keyword>
<keyword id="KW-0862">Zinc</keyword>
<feature type="chain" id="PRO_1000193741" description="Rhamnulose-1-phosphate aldolase">
    <location>
        <begin position="1"/>
        <end position="274"/>
    </location>
</feature>
<feature type="active site" evidence="1">
    <location>
        <position position="117"/>
    </location>
</feature>
<feature type="binding site" evidence="1">
    <location>
        <position position="141"/>
    </location>
    <ligand>
        <name>Zn(2+)</name>
        <dbReference type="ChEBI" id="CHEBI:29105"/>
    </ligand>
</feature>
<feature type="binding site" evidence="1">
    <location>
        <position position="143"/>
    </location>
    <ligand>
        <name>Zn(2+)</name>
        <dbReference type="ChEBI" id="CHEBI:29105"/>
    </ligand>
</feature>
<feature type="binding site" evidence="1">
    <location>
        <position position="212"/>
    </location>
    <ligand>
        <name>Zn(2+)</name>
        <dbReference type="ChEBI" id="CHEBI:29105"/>
    </ligand>
</feature>
<sequence>MQAILSSWFIQGMIKATSDMWHKGWDERNGGNISLRLLAEEVEPYRRDFYQQPRKVELTQPAPELANSWFLVTGSGKFFRNVELNPAENLVLLQVSNDGMAYHIHWGLTQGGLPTSELAAHFQSHIVRMQVSGGTNRVIMHCHATNLIALSYVQKLENASFTRLLWEGSTECLVVFPDGIGIVPWMVPGTDGIGTQTAEQMREHSLVLWPFHGIFGSGPTLDDAFGLIDTAEKSAEIMVKVLSMGGKKQTISREQLIALAARFDVTPMAAALDA</sequence>
<reference key="1">
    <citation type="submission" date="2008-02" db="EMBL/GenBank/DDBJ databases">
        <title>Complete sequence of Yersinia pseudotuberculosis YPIII.</title>
        <authorList>
            <consortium name="US DOE Joint Genome Institute"/>
            <person name="Copeland A."/>
            <person name="Lucas S."/>
            <person name="Lapidus A."/>
            <person name="Glavina del Rio T."/>
            <person name="Dalin E."/>
            <person name="Tice H."/>
            <person name="Bruce D."/>
            <person name="Goodwin L."/>
            <person name="Pitluck S."/>
            <person name="Munk A.C."/>
            <person name="Brettin T."/>
            <person name="Detter J.C."/>
            <person name="Han C."/>
            <person name="Tapia R."/>
            <person name="Schmutz J."/>
            <person name="Larimer F."/>
            <person name="Land M."/>
            <person name="Hauser L."/>
            <person name="Challacombe J.F."/>
            <person name="Green L."/>
            <person name="Lindler L.E."/>
            <person name="Nikolich M.P."/>
            <person name="Richardson P."/>
        </authorList>
    </citation>
    <scope>NUCLEOTIDE SEQUENCE [LARGE SCALE GENOMIC DNA]</scope>
    <source>
        <strain>YPIII</strain>
    </source>
</reference>
<comment type="function">
    <text evidence="1">Catalyzes the reversible cleavage of L-rhamnulose-1-phosphate to dihydroxyacetone phosphate (DHAP) and L-lactaldehyde.</text>
</comment>
<comment type="catalytic activity">
    <reaction evidence="1">
        <text>L-rhamnulose 1-phosphate = (S)-lactaldehyde + dihydroxyacetone phosphate</text>
        <dbReference type="Rhea" id="RHEA:19689"/>
        <dbReference type="ChEBI" id="CHEBI:18041"/>
        <dbReference type="ChEBI" id="CHEBI:57642"/>
        <dbReference type="ChEBI" id="CHEBI:58313"/>
        <dbReference type="EC" id="4.1.2.19"/>
    </reaction>
</comment>
<comment type="cofactor">
    <cofactor evidence="1">
        <name>Zn(2+)</name>
        <dbReference type="ChEBI" id="CHEBI:29105"/>
    </cofactor>
    <text evidence="1">Binds 1 zinc ion per subunit.</text>
</comment>
<comment type="pathway">
    <text evidence="1">Carbohydrate degradation; L-rhamnose degradation; glycerone phosphate from L-rhamnose: step 3/3.</text>
</comment>
<comment type="subunit">
    <text evidence="1">Homotetramer.</text>
</comment>
<comment type="subcellular location">
    <subcellularLocation>
        <location evidence="1">Cytoplasm</location>
    </subcellularLocation>
</comment>
<comment type="similarity">
    <text evidence="1">Belongs to the aldolase class II family. RhaD subfamily.</text>
</comment>
<accession>B1JND0</accession>
<proteinExistence type="inferred from homology"/>
<protein>
    <recommendedName>
        <fullName evidence="1">Rhamnulose-1-phosphate aldolase</fullName>
        <ecNumber evidence="1">4.1.2.19</ecNumber>
    </recommendedName>
</protein>
<evidence type="ECO:0000255" key="1">
    <source>
        <dbReference type="HAMAP-Rule" id="MF_00770"/>
    </source>
</evidence>
<name>RHAD_YERPY</name>